<feature type="chain" id="PRO_0000160650" description="Uncharacterized protein in mosA 5'region">
    <location>
        <begin position="1"/>
        <end position="102"/>
    </location>
</feature>
<feature type="region of interest" description="Disordered" evidence="1">
    <location>
        <begin position="1"/>
        <end position="41"/>
    </location>
</feature>
<organism>
    <name type="scientific">Rhizobium meliloti</name>
    <name type="common">Ensifer meliloti</name>
    <name type="synonym">Sinorhizobium meliloti</name>
    <dbReference type="NCBI Taxonomy" id="382"/>
    <lineage>
        <taxon>Bacteria</taxon>
        <taxon>Pseudomonadati</taxon>
        <taxon>Pseudomonadota</taxon>
        <taxon>Alphaproteobacteria</taxon>
        <taxon>Hyphomicrobiales</taxon>
        <taxon>Rhizobiaceae</taxon>
        <taxon>Sinorhizobium/Ensifer group</taxon>
        <taxon>Sinorhizobium</taxon>
    </lineage>
</organism>
<dbReference type="EMBL" id="L17071">
    <property type="protein sequence ID" value="AAA26300.1"/>
    <property type="molecule type" value="Genomic_DNA"/>
</dbReference>
<dbReference type="PIR" id="A53308">
    <property type="entry name" value="A53308"/>
</dbReference>
<dbReference type="RefSeq" id="WP_046066573.1">
    <property type="nucleotide sequence ID" value="NZ_JZXD01000015.1"/>
</dbReference>
<dbReference type="PATRIC" id="fig|382.53.peg.1540"/>
<evidence type="ECO:0000256" key="1">
    <source>
        <dbReference type="SAM" id="MobiDB-lite"/>
    </source>
</evidence>
<evidence type="ECO:0000305" key="2"/>
<name>YMSA_RHIML</name>
<accession>Q07602</accession>
<sequence>MAAPRQIAFYGKGGTGKPKRKPEPVTASKEDRCLGSPSKNKAHFHSRMNVMARMRGGHGFRVPSAASRKAMKHKWKGQPLPKKALILLEGTKMGTGQPPVAS</sequence>
<reference key="1">
    <citation type="journal article" date="1993" name="J. Bacteriol.">
        <title>The Rhizobium meliloti rhizopine mos locus is a mosaic structure facilitating its symbiotic regulation.</title>
        <authorList>
            <person name="Murphy P.J."/>
            <person name="Trenz S.P."/>
            <person name="Grzemski W."/>
            <person name="de Bruijn F.J."/>
            <person name="Schell J."/>
        </authorList>
    </citation>
    <scope>NUCLEOTIDE SEQUENCE [GENOMIC DNA]</scope>
    <source>
        <strain>L5-30</strain>
    </source>
</reference>
<proteinExistence type="predicted"/>
<protein>
    <recommendedName>
        <fullName>Uncharacterized protein in mosA 5'region</fullName>
    </recommendedName>
    <alternativeName>
        <fullName>ORF1</fullName>
    </alternativeName>
</protein>
<comment type="function">
    <text>This protein is either not expressed, expressed at low levels or rapidly degraded.</text>
</comment>
<comment type="similarity">
    <text evidence="2">To the N-terminal of nitrogenase iron protein (NifH). Has lost the ATP-binding site.</text>
</comment>